<evidence type="ECO:0000255" key="1">
    <source>
        <dbReference type="HAMAP-Rule" id="MF_01506"/>
    </source>
</evidence>
<name>TLP_BACP2</name>
<gene>
    <name evidence="1" type="primary">tlp</name>
    <name type="ordered locus">BPUM_1703</name>
</gene>
<dbReference type="EMBL" id="CP000813">
    <property type="protein sequence ID" value="ABV62381.1"/>
    <property type="molecule type" value="Genomic_DNA"/>
</dbReference>
<dbReference type="RefSeq" id="WP_012010110.1">
    <property type="nucleotide sequence ID" value="NZ_VEIS01000012.1"/>
</dbReference>
<dbReference type="SMR" id="A8FDR4"/>
<dbReference type="STRING" id="315750.BPUM_1703"/>
<dbReference type="GeneID" id="23399406"/>
<dbReference type="KEGG" id="bpu:BPUM_1703"/>
<dbReference type="eggNOG" id="ENOG50330RR">
    <property type="taxonomic scope" value="Bacteria"/>
</dbReference>
<dbReference type="HOGENOM" id="CLU_178266_1_0_9"/>
<dbReference type="OrthoDB" id="1799076at2"/>
<dbReference type="Proteomes" id="UP000001355">
    <property type="component" value="Chromosome"/>
</dbReference>
<dbReference type="GO" id="GO:0030436">
    <property type="term" value="P:asexual sporulation"/>
    <property type="evidence" value="ECO:0007669"/>
    <property type="project" value="UniProtKB-UniRule"/>
</dbReference>
<dbReference type="GO" id="GO:0030435">
    <property type="term" value="P:sporulation resulting in formation of a cellular spore"/>
    <property type="evidence" value="ECO:0007669"/>
    <property type="project" value="UniProtKB-KW"/>
</dbReference>
<dbReference type="HAMAP" id="MF_01506">
    <property type="entry name" value="Tlp"/>
    <property type="match status" value="1"/>
</dbReference>
<dbReference type="InterPro" id="IPR017524">
    <property type="entry name" value="SASP_thioredoxin-like"/>
</dbReference>
<dbReference type="NCBIfam" id="TIGR03090">
    <property type="entry name" value="SASP_tlp"/>
    <property type="match status" value="1"/>
</dbReference>
<dbReference type="Pfam" id="PF19824">
    <property type="entry name" value="Tlp"/>
    <property type="match status" value="1"/>
</dbReference>
<accession>A8FDR4</accession>
<sequence length="80" mass="9289">MNEKSYQSNPDDRSDNVEKLQDMIENTLDNIDESEAAMALSTDQEKQMIKQKNENRKMSIDAMRSEIKDEEAARKNGYTE</sequence>
<protein>
    <recommendedName>
        <fullName evidence="1">Small, acid-soluble spore protein Tlp</fullName>
    </recommendedName>
</protein>
<keyword id="KW-0749">Sporulation</keyword>
<organism>
    <name type="scientific">Bacillus pumilus (strain SAFR-032)</name>
    <dbReference type="NCBI Taxonomy" id="315750"/>
    <lineage>
        <taxon>Bacteria</taxon>
        <taxon>Bacillati</taxon>
        <taxon>Bacillota</taxon>
        <taxon>Bacilli</taxon>
        <taxon>Bacillales</taxon>
        <taxon>Bacillaceae</taxon>
        <taxon>Bacillus</taxon>
    </lineage>
</organism>
<reference key="1">
    <citation type="journal article" date="2007" name="PLoS ONE">
        <title>Paradoxical DNA repair and peroxide resistance gene conservation in Bacillus pumilus SAFR-032.</title>
        <authorList>
            <person name="Gioia J."/>
            <person name="Yerrapragada S."/>
            <person name="Qin X."/>
            <person name="Jiang H."/>
            <person name="Igboeli O.C."/>
            <person name="Muzny D."/>
            <person name="Dugan-Rocha S."/>
            <person name="Ding Y."/>
            <person name="Hawes A."/>
            <person name="Liu W."/>
            <person name="Perez L."/>
            <person name="Kovar C."/>
            <person name="Dinh H."/>
            <person name="Lee S."/>
            <person name="Nazareth L."/>
            <person name="Blyth P."/>
            <person name="Holder M."/>
            <person name="Buhay C."/>
            <person name="Tirumalai M.R."/>
            <person name="Liu Y."/>
            <person name="Dasgupta I."/>
            <person name="Bokhetache L."/>
            <person name="Fujita M."/>
            <person name="Karouia F."/>
            <person name="Eswara Moorthy P."/>
            <person name="Siefert J."/>
            <person name="Uzman A."/>
            <person name="Buzumbo P."/>
            <person name="Verma A."/>
            <person name="Zwiya H."/>
            <person name="McWilliams B.D."/>
            <person name="Olowu A."/>
            <person name="Clinkenbeard K.D."/>
            <person name="Newcombe D."/>
            <person name="Golebiewski L."/>
            <person name="Petrosino J.F."/>
            <person name="Nicholson W.L."/>
            <person name="Fox G.E."/>
            <person name="Venkateswaran K."/>
            <person name="Highlander S.K."/>
            <person name="Weinstock G.M."/>
        </authorList>
    </citation>
    <scope>NUCLEOTIDE SEQUENCE [LARGE SCALE GENOMIC DNA]</scope>
    <source>
        <strain>SAFR-032</strain>
    </source>
</reference>
<proteinExistence type="inferred from homology"/>
<comment type="subcellular location">
    <subcellularLocation>
        <location evidence="1">Spore core</location>
    </subcellularLocation>
</comment>
<comment type="induction">
    <text evidence="1">Expressed only in the forespore compartment of sporulating cells.</text>
</comment>
<comment type="similarity">
    <text evidence="1">Belongs to the Tlp family.</text>
</comment>
<feature type="chain" id="PRO_0000318536" description="Small, acid-soluble spore protein Tlp">
    <location>
        <begin position="1"/>
        <end position="80"/>
    </location>
</feature>